<keyword id="KW-0093">Biotin biosynthesis</keyword>
<keyword id="KW-0663">Pyridoxal phosphate</keyword>
<keyword id="KW-1185">Reference proteome</keyword>
<keyword id="KW-0808">Transferase</keyword>
<name>BIOF_XANOR</name>
<gene>
    <name evidence="1" type="primary">bioF</name>
    <name type="ordered locus">XOO0456</name>
</gene>
<evidence type="ECO:0000255" key="1">
    <source>
        <dbReference type="HAMAP-Rule" id="MF_01693"/>
    </source>
</evidence>
<evidence type="ECO:0000305" key="2"/>
<dbReference type="EC" id="2.3.1.47" evidence="1"/>
<dbReference type="EMBL" id="AE013598">
    <property type="protein sequence ID" value="AAW73710.1"/>
    <property type="status" value="ALT_INIT"/>
    <property type="molecule type" value="Genomic_DNA"/>
</dbReference>
<dbReference type="SMR" id="Q5H5R0"/>
<dbReference type="STRING" id="291331.XOO0456"/>
<dbReference type="KEGG" id="xoo:XOO0456"/>
<dbReference type="HOGENOM" id="CLU_015846_11_2_6"/>
<dbReference type="UniPathway" id="UPA00078"/>
<dbReference type="Proteomes" id="UP000006735">
    <property type="component" value="Chromosome"/>
</dbReference>
<dbReference type="GO" id="GO:0008710">
    <property type="term" value="F:8-amino-7-oxononanoate synthase activity"/>
    <property type="evidence" value="ECO:0007669"/>
    <property type="project" value="UniProtKB-UniRule"/>
</dbReference>
<dbReference type="GO" id="GO:0030170">
    <property type="term" value="F:pyridoxal phosphate binding"/>
    <property type="evidence" value="ECO:0007669"/>
    <property type="project" value="UniProtKB-UniRule"/>
</dbReference>
<dbReference type="GO" id="GO:0009102">
    <property type="term" value="P:biotin biosynthetic process"/>
    <property type="evidence" value="ECO:0007669"/>
    <property type="project" value="UniProtKB-UniRule"/>
</dbReference>
<dbReference type="Gene3D" id="3.90.1150.10">
    <property type="entry name" value="Aspartate Aminotransferase, domain 1"/>
    <property type="match status" value="1"/>
</dbReference>
<dbReference type="Gene3D" id="3.40.640.10">
    <property type="entry name" value="Type I PLP-dependent aspartate aminotransferase-like (Major domain)"/>
    <property type="match status" value="1"/>
</dbReference>
<dbReference type="HAMAP" id="MF_01693">
    <property type="entry name" value="BioF_aminotrans_2"/>
    <property type="match status" value="1"/>
</dbReference>
<dbReference type="InterPro" id="IPR004839">
    <property type="entry name" value="Aminotransferase_I/II_large"/>
</dbReference>
<dbReference type="InterPro" id="IPR050087">
    <property type="entry name" value="AON_synthase_class-II"/>
</dbReference>
<dbReference type="InterPro" id="IPR004723">
    <property type="entry name" value="AONS_Archaea/Proteobacteria"/>
</dbReference>
<dbReference type="InterPro" id="IPR022834">
    <property type="entry name" value="AONS_Proteobacteria"/>
</dbReference>
<dbReference type="InterPro" id="IPR015424">
    <property type="entry name" value="PyrdxlP-dep_Trfase"/>
</dbReference>
<dbReference type="InterPro" id="IPR015421">
    <property type="entry name" value="PyrdxlP-dep_Trfase_major"/>
</dbReference>
<dbReference type="InterPro" id="IPR015422">
    <property type="entry name" value="PyrdxlP-dep_Trfase_small"/>
</dbReference>
<dbReference type="NCBIfam" id="TIGR00858">
    <property type="entry name" value="bioF"/>
    <property type="match status" value="1"/>
</dbReference>
<dbReference type="PANTHER" id="PTHR13693:SF100">
    <property type="entry name" value="8-AMINO-7-OXONONANOATE SYNTHASE"/>
    <property type="match status" value="1"/>
</dbReference>
<dbReference type="PANTHER" id="PTHR13693">
    <property type="entry name" value="CLASS II AMINOTRANSFERASE/8-AMINO-7-OXONONANOATE SYNTHASE"/>
    <property type="match status" value="1"/>
</dbReference>
<dbReference type="Pfam" id="PF00155">
    <property type="entry name" value="Aminotran_1_2"/>
    <property type="match status" value="1"/>
</dbReference>
<dbReference type="SUPFAM" id="SSF53383">
    <property type="entry name" value="PLP-dependent transferases"/>
    <property type="match status" value="1"/>
</dbReference>
<dbReference type="PROSITE" id="PS00599">
    <property type="entry name" value="AA_TRANSFER_CLASS_2"/>
    <property type="match status" value="1"/>
</dbReference>
<proteinExistence type="inferred from homology"/>
<sequence length="401" mass="43036">MARPDLHGRISSLRKLHVAQDRVRVRRQVGRRDGVRLEIDGRWLTGFCSNDYLGLSQQFEVIAALQDAAARDGAGATASHLICGHHTAHETLEREIAEWLGYPSALLFGNGFIANLAVQQALLSEEDDVCVQDRLNHASLLDATRLAGCRLRRYPHLDVEGAMRQLKGAPEGAAMLASDAVFSMDGDVAPLRALSLVARMQDALFYVDDAHGVGVLGPQGRGCVADAGLGVAEVPLQLVTLGKALGGYGAVVVGDDALVRHLAETARPYIYTTALPPAQVAATLAAVRLARRDDWRRARLVELIAAFRDGARKHGFELMASDTPIQPLLCGEEATVMAMSAALEQAGFMVGAIRPPTVPEGKARLRVTLSALHTPQQVQALIDAIVQARDVVSRQPLRASA</sequence>
<comment type="function">
    <text evidence="1">Catalyzes the decarboxylative condensation of pimeloyl-[acyl-carrier protein] and L-alanine to produce 8-amino-7-oxononanoate (AON), [acyl-carrier protein], and carbon dioxide.</text>
</comment>
<comment type="catalytic activity">
    <reaction evidence="1">
        <text>6-carboxyhexanoyl-[ACP] + L-alanine + H(+) = (8S)-8-amino-7-oxononanoate + holo-[ACP] + CO2</text>
        <dbReference type="Rhea" id="RHEA:42288"/>
        <dbReference type="Rhea" id="RHEA-COMP:9685"/>
        <dbReference type="Rhea" id="RHEA-COMP:9955"/>
        <dbReference type="ChEBI" id="CHEBI:15378"/>
        <dbReference type="ChEBI" id="CHEBI:16526"/>
        <dbReference type="ChEBI" id="CHEBI:57972"/>
        <dbReference type="ChEBI" id="CHEBI:64479"/>
        <dbReference type="ChEBI" id="CHEBI:78846"/>
        <dbReference type="ChEBI" id="CHEBI:149468"/>
        <dbReference type="EC" id="2.3.1.47"/>
    </reaction>
</comment>
<comment type="cofactor">
    <cofactor evidence="1">
        <name>pyridoxal 5'-phosphate</name>
        <dbReference type="ChEBI" id="CHEBI:597326"/>
    </cofactor>
</comment>
<comment type="pathway">
    <text evidence="1">Cofactor biosynthesis; biotin biosynthesis.</text>
</comment>
<comment type="subunit">
    <text evidence="1">Homodimer.</text>
</comment>
<comment type="similarity">
    <text evidence="1">Belongs to the class-II pyridoxal-phosphate-dependent aminotransferase family. BioF subfamily.</text>
</comment>
<comment type="sequence caution" evidence="2">
    <conflict type="erroneous initiation">
        <sequence resource="EMBL-CDS" id="AAW73710"/>
    </conflict>
</comment>
<reference key="1">
    <citation type="journal article" date="2005" name="Nucleic Acids Res.">
        <title>The genome sequence of Xanthomonas oryzae pathovar oryzae KACC10331, the bacterial blight pathogen of rice.</title>
        <authorList>
            <person name="Lee B.-M."/>
            <person name="Park Y.-J."/>
            <person name="Park D.-S."/>
            <person name="Kang H.-W."/>
            <person name="Kim J.-G."/>
            <person name="Song E.-S."/>
            <person name="Park I.-C."/>
            <person name="Yoon U.-H."/>
            <person name="Hahn J.-H."/>
            <person name="Koo B.-S."/>
            <person name="Lee G.-B."/>
            <person name="Kim H."/>
            <person name="Park H.-S."/>
            <person name="Yoon K.-O."/>
            <person name="Kim J.-H."/>
            <person name="Jung C.-H."/>
            <person name="Koh N.-H."/>
            <person name="Seo J.-S."/>
            <person name="Go S.-J."/>
        </authorList>
    </citation>
    <scope>NUCLEOTIDE SEQUENCE [LARGE SCALE GENOMIC DNA]</scope>
    <source>
        <strain>KACC10331 / KXO85</strain>
    </source>
</reference>
<protein>
    <recommendedName>
        <fullName evidence="1">8-amino-7-oxononanoate synthase</fullName>
        <shortName evidence="1">AONS</shortName>
        <ecNumber evidence="1">2.3.1.47</ecNumber>
    </recommendedName>
    <alternativeName>
        <fullName evidence="1">7-keto-8-amino-pelargonic acid synthase</fullName>
        <shortName evidence="1">7-KAP synthase</shortName>
        <shortName evidence="1">KAPA synthase</shortName>
    </alternativeName>
    <alternativeName>
        <fullName evidence="1">8-amino-7-ketopelargonate synthase</fullName>
    </alternativeName>
</protein>
<feature type="chain" id="PRO_0000381147" description="8-amino-7-oxononanoate synthase">
    <location>
        <begin position="1"/>
        <end position="401"/>
    </location>
</feature>
<feature type="binding site" evidence="1">
    <location>
        <position position="24"/>
    </location>
    <ligand>
        <name>substrate</name>
    </ligand>
</feature>
<feature type="binding site" evidence="1">
    <location>
        <begin position="111"/>
        <end position="112"/>
    </location>
    <ligand>
        <name>pyridoxal 5'-phosphate</name>
        <dbReference type="ChEBI" id="CHEBI:597326"/>
    </ligand>
</feature>
<feature type="binding site" evidence="1">
    <location>
        <position position="137"/>
    </location>
    <ligand>
        <name>substrate</name>
    </ligand>
</feature>
<feature type="binding site" evidence="1">
    <location>
        <position position="183"/>
    </location>
    <ligand>
        <name>pyridoxal 5'-phosphate</name>
        <dbReference type="ChEBI" id="CHEBI:597326"/>
    </ligand>
</feature>
<feature type="binding site" evidence="1">
    <location>
        <position position="211"/>
    </location>
    <ligand>
        <name>pyridoxal 5'-phosphate</name>
        <dbReference type="ChEBI" id="CHEBI:597326"/>
    </ligand>
</feature>
<feature type="binding site" evidence="1">
    <location>
        <position position="240"/>
    </location>
    <ligand>
        <name>pyridoxal 5'-phosphate</name>
        <dbReference type="ChEBI" id="CHEBI:597326"/>
    </ligand>
</feature>
<feature type="binding site" evidence="1">
    <location>
        <position position="357"/>
    </location>
    <ligand>
        <name>substrate</name>
    </ligand>
</feature>
<feature type="modified residue" description="N6-(pyridoxal phosphate)lysine" evidence="1">
    <location>
        <position position="243"/>
    </location>
</feature>
<accession>Q5H5R0</accession>
<organism>
    <name type="scientific">Xanthomonas oryzae pv. oryzae (strain KACC10331 / KXO85)</name>
    <dbReference type="NCBI Taxonomy" id="291331"/>
    <lineage>
        <taxon>Bacteria</taxon>
        <taxon>Pseudomonadati</taxon>
        <taxon>Pseudomonadota</taxon>
        <taxon>Gammaproteobacteria</taxon>
        <taxon>Lysobacterales</taxon>
        <taxon>Lysobacteraceae</taxon>
        <taxon>Xanthomonas</taxon>
    </lineage>
</organism>